<evidence type="ECO:0000255" key="1">
    <source>
        <dbReference type="HAMAP-Rule" id="MF_00176"/>
    </source>
</evidence>
<sequence>MLDSKLVRTQLTEIAERLATRGFALDVARFEALESQRKSVQVRTEQLQAERNSRSKSIGQAKARGEDIAPLLAEVDQMGSDLEAGKRELDAIQNELDNLLLNIPNLPHESVPVGADEDGNVEVARWGTPRSFDFEIKDHVALGEQHGWLDFETAAKLSGARFALLRGPIARLHRALAQFMINLHTGEHGYEEAYTPYLVQAPALQGTGQLPKFEEDLFKIRREDQADLYLIPTAEVSLTNIVAGEILDAKQLPLKFVAHTPCFRSEAGASGRDTRGMIRQHQFDKVEMVQIVEPSKSFEALEGMTAHAERVLQLLELPYRKLALCTGDMGFSAVKTYDLEVWVPSQDKYREISSCSNCGDFQARRMQARYRNPETGKPELVHTLNGSGLAVGRTLVAVLENYQQADGSIRVPEVLKPYMGGIEVIG</sequence>
<comment type="function">
    <text evidence="1">Catalyzes the attachment of serine to tRNA(Ser). Is also able to aminoacylate tRNA(Sec) with serine, to form the misacylated tRNA L-seryl-tRNA(Sec), which will be further converted into selenocysteinyl-tRNA(Sec).</text>
</comment>
<comment type="catalytic activity">
    <reaction evidence="1">
        <text>tRNA(Ser) + L-serine + ATP = L-seryl-tRNA(Ser) + AMP + diphosphate + H(+)</text>
        <dbReference type="Rhea" id="RHEA:12292"/>
        <dbReference type="Rhea" id="RHEA-COMP:9669"/>
        <dbReference type="Rhea" id="RHEA-COMP:9703"/>
        <dbReference type="ChEBI" id="CHEBI:15378"/>
        <dbReference type="ChEBI" id="CHEBI:30616"/>
        <dbReference type="ChEBI" id="CHEBI:33019"/>
        <dbReference type="ChEBI" id="CHEBI:33384"/>
        <dbReference type="ChEBI" id="CHEBI:78442"/>
        <dbReference type="ChEBI" id="CHEBI:78533"/>
        <dbReference type="ChEBI" id="CHEBI:456215"/>
        <dbReference type="EC" id="6.1.1.11"/>
    </reaction>
</comment>
<comment type="catalytic activity">
    <reaction evidence="1">
        <text>tRNA(Sec) + L-serine + ATP = L-seryl-tRNA(Sec) + AMP + diphosphate + H(+)</text>
        <dbReference type="Rhea" id="RHEA:42580"/>
        <dbReference type="Rhea" id="RHEA-COMP:9742"/>
        <dbReference type="Rhea" id="RHEA-COMP:10128"/>
        <dbReference type="ChEBI" id="CHEBI:15378"/>
        <dbReference type="ChEBI" id="CHEBI:30616"/>
        <dbReference type="ChEBI" id="CHEBI:33019"/>
        <dbReference type="ChEBI" id="CHEBI:33384"/>
        <dbReference type="ChEBI" id="CHEBI:78442"/>
        <dbReference type="ChEBI" id="CHEBI:78533"/>
        <dbReference type="ChEBI" id="CHEBI:456215"/>
        <dbReference type="EC" id="6.1.1.11"/>
    </reaction>
</comment>
<comment type="pathway">
    <text evidence="1">Aminoacyl-tRNA biosynthesis; selenocysteinyl-tRNA(Sec) biosynthesis; L-seryl-tRNA(Sec) from L-serine and tRNA(Sec): step 1/1.</text>
</comment>
<comment type="subunit">
    <text evidence="1">Homodimer. The tRNA molecule binds across the dimer.</text>
</comment>
<comment type="subcellular location">
    <subcellularLocation>
        <location evidence="1">Cytoplasm</location>
    </subcellularLocation>
</comment>
<comment type="domain">
    <text evidence="1">Consists of two distinct domains, a catalytic core and a N-terminal extension that is involved in tRNA binding.</text>
</comment>
<comment type="similarity">
    <text evidence="1">Belongs to the class-II aminoacyl-tRNA synthetase family. Type-1 seryl-tRNA synthetase subfamily.</text>
</comment>
<organism>
    <name type="scientific">Ectopseudomonas mendocina (strain ymp)</name>
    <name type="common">Pseudomonas mendocina</name>
    <dbReference type="NCBI Taxonomy" id="399739"/>
    <lineage>
        <taxon>Bacteria</taxon>
        <taxon>Pseudomonadati</taxon>
        <taxon>Pseudomonadota</taxon>
        <taxon>Gammaproteobacteria</taxon>
        <taxon>Pseudomonadales</taxon>
        <taxon>Pseudomonadaceae</taxon>
        <taxon>Ectopseudomonas</taxon>
    </lineage>
</organism>
<keyword id="KW-0030">Aminoacyl-tRNA synthetase</keyword>
<keyword id="KW-0067">ATP-binding</keyword>
<keyword id="KW-0963">Cytoplasm</keyword>
<keyword id="KW-0436">Ligase</keyword>
<keyword id="KW-0547">Nucleotide-binding</keyword>
<keyword id="KW-0648">Protein biosynthesis</keyword>
<protein>
    <recommendedName>
        <fullName evidence="1">Serine--tRNA ligase</fullName>
        <ecNumber evidence="1">6.1.1.11</ecNumber>
    </recommendedName>
    <alternativeName>
        <fullName evidence="1">Seryl-tRNA synthetase</fullName>
        <shortName evidence="1">SerRS</shortName>
    </alternativeName>
    <alternativeName>
        <fullName evidence="1">Seryl-tRNA(Ser/Sec) synthetase</fullName>
    </alternativeName>
</protein>
<dbReference type="EC" id="6.1.1.11" evidence="1"/>
<dbReference type="EMBL" id="CP000680">
    <property type="protein sequence ID" value="ABP85140.1"/>
    <property type="molecule type" value="Genomic_DNA"/>
</dbReference>
<dbReference type="SMR" id="A4XUX4"/>
<dbReference type="STRING" id="399739.Pmen_2384"/>
<dbReference type="KEGG" id="pmy:Pmen_2384"/>
<dbReference type="PATRIC" id="fig|399739.8.peg.2405"/>
<dbReference type="eggNOG" id="COG0172">
    <property type="taxonomic scope" value="Bacteria"/>
</dbReference>
<dbReference type="HOGENOM" id="CLU_023797_1_1_6"/>
<dbReference type="OrthoDB" id="9804647at2"/>
<dbReference type="UniPathway" id="UPA00906">
    <property type="reaction ID" value="UER00895"/>
</dbReference>
<dbReference type="GO" id="GO:0005737">
    <property type="term" value="C:cytoplasm"/>
    <property type="evidence" value="ECO:0007669"/>
    <property type="project" value="UniProtKB-SubCell"/>
</dbReference>
<dbReference type="GO" id="GO:0005524">
    <property type="term" value="F:ATP binding"/>
    <property type="evidence" value="ECO:0007669"/>
    <property type="project" value="UniProtKB-UniRule"/>
</dbReference>
<dbReference type="GO" id="GO:0004828">
    <property type="term" value="F:serine-tRNA ligase activity"/>
    <property type="evidence" value="ECO:0007669"/>
    <property type="project" value="UniProtKB-UniRule"/>
</dbReference>
<dbReference type="GO" id="GO:0016260">
    <property type="term" value="P:selenocysteine biosynthetic process"/>
    <property type="evidence" value="ECO:0007669"/>
    <property type="project" value="UniProtKB-UniRule"/>
</dbReference>
<dbReference type="GO" id="GO:0006434">
    <property type="term" value="P:seryl-tRNA aminoacylation"/>
    <property type="evidence" value="ECO:0007669"/>
    <property type="project" value="UniProtKB-UniRule"/>
</dbReference>
<dbReference type="CDD" id="cd00770">
    <property type="entry name" value="SerRS_core"/>
    <property type="match status" value="1"/>
</dbReference>
<dbReference type="Gene3D" id="3.30.930.10">
    <property type="entry name" value="Bira Bifunctional Protein, Domain 2"/>
    <property type="match status" value="1"/>
</dbReference>
<dbReference type="Gene3D" id="1.10.287.40">
    <property type="entry name" value="Serine-tRNA synthetase, tRNA binding domain"/>
    <property type="match status" value="1"/>
</dbReference>
<dbReference type="HAMAP" id="MF_00176">
    <property type="entry name" value="Ser_tRNA_synth_type1"/>
    <property type="match status" value="1"/>
</dbReference>
<dbReference type="InterPro" id="IPR002314">
    <property type="entry name" value="aa-tRNA-synt_IIb"/>
</dbReference>
<dbReference type="InterPro" id="IPR006195">
    <property type="entry name" value="aa-tRNA-synth_II"/>
</dbReference>
<dbReference type="InterPro" id="IPR045864">
    <property type="entry name" value="aa-tRNA-synth_II/BPL/LPL"/>
</dbReference>
<dbReference type="InterPro" id="IPR002317">
    <property type="entry name" value="Ser-tRNA-ligase_type_1"/>
</dbReference>
<dbReference type="InterPro" id="IPR015866">
    <property type="entry name" value="Ser-tRNA-synth_1_N"/>
</dbReference>
<dbReference type="InterPro" id="IPR042103">
    <property type="entry name" value="SerRS_1_N_sf"/>
</dbReference>
<dbReference type="InterPro" id="IPR033729">
    <property type="entry name" value="SerRS_core"/>
</dbReference>
<dbReference type="InterPro" id="IPR010978">
    <property type="entry name" value="tRNA-bd_arm"/>
</dbReference>
<dbReference type="NCBIfam" id="TIGR00414">
    <property type="entry name" value="serS"/>
    <property type="match status" value="1"/>
</dbReference>
<dbReference type="PANTHER" id="PTHR43697:SF1">
    <property type="entry name" value="SERINE--TRNA LIGASE"/>
    <property type="match status" value="1"/>
</dbReference>
<dbReference type="PANTHER" id="PTHR43697">
    <property type="entry name" value="SERYL-TRNA SYNTHETASE"/>
    <property type="match status" value="1"/>
</dbReference>
<dbReference type="Pfam" id="PF02403">
    <property type="entry name" value="Seryl_tRNA_N"/>
    <property type="match status" value="1"/>
</dbReference>
<dbReference type="Pfam" id="PF00587">
    <property type="entry name" value="tRNA-synt_2b"/>
    <property type="match status" value="1"/>
</dbReference>
<dbReference type="PIRSF" id="PIRSF001529">
    <property type="entry name" value="Ser-tRNA-synth_IIa"/>
    <property type="match status" value="1"/>
</dbReference>
<dbReference type="PRINTS" id="PR00981">
    <property type="entry name" value="TRNASYNTHSER"/>
</dbReference>
<dbReference type="SUPFAM" id="SSF55681">
    <property type="entry name" value="Class II aaRS and biotin synthetases"/>
    <property type="match status" value="1"/>
</dbReference>
<dbReference type="SUPFAM" id="SSF46589">
    <property type="entry name" value="tRNA-binding arm"/>
    <property type="match status" value="1"/>
</dbReference>
<dbReference type="PROSITE" id="PS50862">
    <property type="entry name" value="AA_TRNA_LIGASE_II"/>
    <property type="match status" value="1"/>
</dbReference>
<proteinExistence type="inferred from homology"/>
<feature type="chain" id="PRO_1000019777" description="Serine--tRNA ligase">
    <location>
        <begin position="1"/>
        <end position="426"/>
    </location>
</feature>
<feature type="binding site" evidence="1">
    <location>
        <begin position="233"/>
        <end position="235"/>
    </location>
    <ligand>
        <name>L-serine</name>
        <dbReference type="ChEBI" id="CHEBI:33384"/>
    </ligand>
</feature>
<feature type="binding site" evidence="1">
    <location>
        <begin position="264"/>
        <end position="266"/>
    </location>
    <ligand>
        <name>ATP</name>
        <dbReference type="ChEBI" id="CHEBI:30616"/>
    </ligand>
</feature>
<feature type="binding site" evidence="1">
    <location>
        <position position="287"/>
    </location>
    <ligand>
        <name>L-serine</name>
        <dbReference type="ChEBI" id="CHEBI:33384"/>
    </ligand>
</feature>
<feature type="binding site" evidence="1">
    <location>
        <begin position="351"/>
        <end position="354"/>
    </location>
    <ligand>
        <name>ATP</name>
        <dbReference type="ChEBI" id="CHEBI:30616"/>
    </ligand>
</feature>
<feature type="binding site" evidence="1">
    <location>
        <position position="387"/>
    </location>
    <ligand>
        <name>L-serine</name>
        <dbReference type="ChEBI" id="CHEBI:33384"/>
    </ligand>
</feature>
<accession>A4XUX4</accession>
<name>SYS_ECTM1</name>
<gene>
    <name evidence="1" type="primary">serS</name>
    <name type="ordered locus">Pmen_2384</name>
</gene>
<reference key="1">
    <citation type="submission" date="2007-04" db="EMBL/GenBank/DDBJ databases">
        <title>Complete sequence of Pseudomonas mendocina ymp.</title>
        <authorList>
            <consortium name="US DOE Joint Genome Institute"/>
            <person name="Copeland A."/>
            <person name="Lucas S."/>
            <person name="Lapidus A."/>
            <person name="Barry K."/>
            <person name="Glavina del Rio T."/>
            <person name="Dalin E."/>
            <person name="Tice H."/>
            <person name="Pitluck S."/>
            <person name="Kiss H."/>
            <person name="Brettin T."/>
            <person name="Detter J.C."/>
            <person name="Bruce D."/>
            <person name="Han C."/>
            <person name="Schmutz J."/>
            <person name="Larimer F."/>
            <person name="Land M."/>
            <person name="Hauser L."/>
            <person name="Kyrpides N."/>
            <person name="Mikhailova N."/>
            <person name="Hersman L."/>
            <person name="Dubois J."/>
            <person name="Maurice P."/>
            <person name="Richardson P."/>
        </authorList>
    </citation>
    <scope>NUCLEOTIDE SEQUENCE [LARGE SCALE GENOMIC DNA]</scope>
    <source>
        <strain>ymp</strain>
    </source>
</reference>